<gene>
    <name type="primary">UBP7</name>
    <name type="ordered locus">YIL156W</name>
</gene>
<comment type="function">
    <text evidence="6">Involved in the sorting of ubiquitinated cargo proteins at the multivesicular body (MVB).</text>
</comment>
<comment type="catalytic activity">
    <reaction>
        <text>Thiol-dependent hydrolysis of ester, thioester, amide, peptide and isopeptide bonds formed by the C-terminal Gly of ubiquitin (a 76-residue protein attached to proteins as an intracellular targeting signal).</text>
        <dbReference type="EC" id="3.4.19.12"/>
    </reaction>
</comment>
<comment type="interaction">
    <interactant intactId="EBI-19857">
        <id>P40453</id>
    </interactant>
    <interactant intactId="EBI-3889">
        <id>P38822</id>
        <label>BZZ1</label>
    </interactant>
    <organismsDiffer>false</organismsDiffer>
    <experiments>3</experiments>
</comment>
<comment type="interaction">
    <interactant intactId="EBI-19857">
        <id>P40453</id>
    </interactant>
    <interactant intactId="EBI-5412">
        <id>Q05080</id>
        <label>HOF1</label>
    </interactant>
    <organismsDiffer>false</organismsDiffer>
    <experiments>2</experiments>
</comment>
<comment type="interaction">
    <interactant intactId="EBI-19857">
        <id>P40453</id>
    </interactant>
    <interactant intactId="EBI-1382">
        <id>P38753</id>
        <label>HSE1</label>
    </interactant>
    <organismsDiffer>false</organismsDiffer>
    <experiments>4</experiments>
</comment>
<comment type="interaction">
    <interactant intactId="EBI-19857">
        <id>P40453</id>
    </interactant>
    <interactant intactId="EBI-22980">
        <id>P43603</id>
        <label>LSB3</label>
    </interactant>
    <organismsDiffer>false</organismsDiffer>
    <experiments>2</experiments>
</comment>
<comment type="interaction">
    <interactant intactId="EBI-19857">
        <id>P40453</id>
    </interactant>
    <interactant intactId="EBI-11670">
        <id>P36006</id>
        <label>MYO3</label>
    </interactant>
    <organismsDiffer>false</organismsDiffer>
    <experiments>3</experiments>
</comment>
<comment type="interaction">
    <interactant intactId="EBI-19857">
        <id>P40453</id>
    </interactant>
    <interactant intactId="EBI-11687">
        <id>Q04439</id>
        <label>MYO5</label>
    </interactant>
    <organismsDiffer>false</organismsDiffer>
    <experiments>4</experiments>
</comment>
<comment type="interaction">
    <interactant intactId="EBI-19857">
        <id>P40453</id>
    </interactant>
    <interactant intactId="EBI-13206">
        <id>P80667</id>
        <label>PEX13</label>
    </interactant>
    <organismsDiffer>false</organismsDiffer>
    <experiments>2</experiments>
</comment>
<comment type="subcellular location">
    <subcellularLocation>
        <location evidence="4">Cytoplasm</location>
    </subcellularLocation>
</comment>
<comment type="miscellaneous">
    <text evidence="5">Present with 606 molecules/cell in log phase SD medium.</text>
</comment>
<comment type="similarity">
    <text evidence="7">Belongs to the peptidase C19 family.</text>
</comment>
<dbReference type="EC" id="3.4.19.12"/>
<dbReference type="EMBL" id="Z38059">
    <property type="protein sequence ID" value="CAA86122.1"/>
    <property type="molecule type" value="Genomic_DNA"/>
</dbReference>
<dbReference type="EMBL" id="BK006942">
    <property type="protein sequence ID" value="DAA08397.1"/>
    <property type="molecule type" value="Genomic_DNA"/>
</dbReference>
<dbReference type="PIR" id="S48378">
    <property type="entry name" value="S48378"/>
</dbReference>
<dbReference type="RefSeq" id="NP_012110.1">
    <property type="nucleotide sequence ID" value="NM_001179504.1"/>
</dbReference>
<dbReference type="SMR" id="P40453"/>
<dbReference type="BioGRID" id="34836">
    <property type="interactions" value="104"/>
</dbReference>
<dbReference type="DIP" id="DIP-6272N"/>
<dbReference type="FunCoup" id="P40453">
    <property type="interactions" value="87"/>
</dbReference>
<dbReference type="IntAct" id="P40453">
    <property type="interactions" value="32"/>
</dbReference>
<dbReference type="MINT" id="P40453"/>
<dbReference type="STRING" id="4932.YIL156W"/>
<dbReference type="MEROPS" id="C19.101"/>
<dbReference type="GlyGen" id="P40453">
    <property type="glycosylation" value="2 sites"/>
</dbReference>
<dbReference type="iPTMnet" id="P40453"/>
<dbReference type="PaxDb" id="4932-YIL156W"/>
<dbReference type="PeptideAtlas" id="P40453"/>
<dbReference type="EnsemblFungi" id="YIL156W_mRNA">
    <property type="protein sequence ID" value="YIL156W"/>
    <property type="gene ID" value="YIL156W"/>
</dbReference>
<dbReference type="GeneID" id="854650"/>
<dbReference type="KEGG" id="sce:YIL156W"/>
<dbReference type="AGR" id="SGD:S000001418"/>
<dbReference type="SGD" id="S000001418">
    <property type="gene designation" value="UBP7"/>
</dbReference>
<dbReference type="VEuPathDB" id="FungiDB:YIL156W"/>
<dbReference type="eggNOG" id="KOG1868">
    <property type="taxonomic scope" value="Eukaryota"/>
</dbReference>
<dbReference type="GeneTree" id="ENSGT00940000172369"/>
<dbReference type="HOGENOM" id="CLU_004122_0_0_1"/>
<dbReference type="InParanoid" id="P40453"/>
<dbReference type="OMA" id="NAWDCPK"/>
<dbReference type="OrthoDB" id="292964at2759"/>
<dbReference type="BioCyc" id="YEAST:G3O-31404-MONOMER"/>
<dbReference type="BioGRID-ORCS" id="854650">
    <property type="hits" value="8 hits in 10 CRISPR screens"/>
</dbReference>
<dbReference type="PRO" id="PR:P40453"/>
<dbReference type="Proteomes" id="UP000002311">
    <property type="component" value="Chromosome IX"/>
</dbReference>
<dbReference type="RNAct" id="P40453">
    <property type="molecule type" value="protein"/>
</dbReference>
<dbReference type="GO" id="GO:0005737">
    <property type="term" value="C:cytoplasm"/>
    <property type="evidence" value="ECO:0000305"/>
    <property type="project" value="SGD"/>
</dbReference>
<dbReference type="GO" id="GO:0005829">
    <property type="term" value="C:cytosol"/>
    <property type="evidence" value="ECO:0000318"/>
    <property type="project" value="GO_Central"/>
</dbReference>
<dbReference type="GO" id="GO:0005634">
    <property type="term" value="C:nucleus"/>
    <property type="evidence" value="ECO:0000318"/>
    <property type="project" value="GO_Central"/>
</dbReference>
<dbReference type="GO" id="GO:0004843">
    <property type="term" value="F:cysteine-type deubiquitinase activity"/>
    <property type="evidence" value="ECO:0000314"/>
    <property type="project" value="SGD"/>
</dbReference>
<dbReference type="GO" id="GO:0016579">
    <property type="term" value="P:protein deubiquitination"/>
    <property type="evidence" value="ECO:0000314"/>
    <property type="project" value="SGD"/>
</dbReference>
<dbReference type="GO" id="GO:0006508">
    <property type="term" value="P:proteolysis"/>
    <property type="evidence" value="ECO:0007669"/>
    <property type="project" value="UniProtKB-KW"/>
</dbReference>
<dbReference type="GO" id="GO:0031647">
    <property type="term" value="P:regulation of protein stability"/>
    <property type="evidence" value="ECO:0000318"/>
    <property type="project" value="GO_Central"/>
</dbReference>
<dbReference type="CDD" id="cd02674">
    <property type="entry name" value="Peptidase_C19R"/>
    <property type="match status" value="1"/>
</dbReference>
<dbReference type="FunFam" id="3.40.250.10:FF:000077">
    <property type="entry name" value="Ubiquitin-specific protease"/>
    <property type="match status" value="1"/>
</dbReference>
<dbReference type="FunFam" id="3.90.70.10:FF:000134">
    <property type="entry name" value="Ubiquitin-specific protease"/>
    <property type="match status" value="1"/>
</dbReference>
<dbReference type="Gene3D" id="3.90.70.10">
    <property type="entry name" value="Cysteine proteinases"/>
    <property type="match status" value="1"/>
</dbReference>
<dbReference type="Gene3D" id="3.40.250.10">
    <property type="entry name" value="Rhodanese-like domain"/>
    <property type="match status" value="1"/>
</dbReference>
<dbReference type="InterPro" id="IPR038765">
    <property type="entry name" value="Papain-like_cys_pep_sf"/>
</dbReference>
<dbReference type="InterPro" id="IPR001394">
    <property type="entry name" value="Peptidase_C19_UCH"/>
</dbReference>
<dbReference type="InterPro" id="IPR036873">
    <property type="entry name" value="Rhodanese-like_dom_sf"/>
</dbReference>
<dbReference type="InterPro" id="IPR050185">
    <property type="entry name" value="Ub_carboxyl-term_hydrolase"/>
</dbReference>
<dbReference type="InterPro" id="IPR018200">
    <property type="entry name" value="USP_CS"/>
</dbReference>
<dbReference type="InterPro" id="IPR028889">
    <property type="entry name" value="USP_dom"/>
</dbReference>
<dbReference type="PANTHER" id="PTHR21646">
    <property type="entry name" value="UBIQUITIN CARBOXYL-TERMINAL HYDROLASE"/>
    <property type="match status" value="1"/>
</dbReference>
<dbReference type="PANTHER" id="PTHR21646:SF24">
    <property type="entry name" value="UBIQUITIN CARBOXYL-TERMINAL HYDROLASE"/>
    <property type="match status" value="1"/>
</dbReference>
<dbReference type="Pfam" id="PF00443">
    <property type="entry name" value="UCH"/>
    <property type="match status" value="1"/>
</dbReference>
<dbReference type="SUPFAM" id="SSF54001">
    <property type="entry name" value="Cysteine proteinases"/>
    <property type="match status" value="1"/>
</dbReference>
<dbReference type="SUPFAM" id="SSF52821">
    <property type="entry name" value="Rhodanese/Cell cycle control phosphatase"/>
    <property type="match status" value="1"/>
</dbReference>
<dbReference type="PROSITE" id="PS00972">
    <property type="entry name" value="USP_1"/>
    <property type="match status" value="1"/>
</dbReference>
<dbReference type="PROSITE" id="PS00973">
    <property type="entry name" value="USP_2"/>
    <property type="match status" value="1"/>
</dbReference>
<dbReference type="PROSITE" id="PS50235">
    <property type="entry name" value="USP_3"/>
    <property type="match status" value="1"/>
</dbReference>
<organism>
    <name type="scientific">Saccharomyces cerevisiae (strain ATCC 204508 / S288c)</name>
    <name type="common">Baker's yeast</name>
    <dbReference type="NCBI Taxonomy" id="559292"/>
    <lineage>
        <taxon>Eukaryota</taxon>
        <taxon>Fungi</taxon>
        <taxon>Dikarya</taxon>
        <taxon>Ascomycota</taxon>
        <taxon>Saccharomycotina</taxon>
        <taxon>Saccharomycetes</taxon>
        <taxon>Saccharomycetales</taxon>
        <taxon>Saccharomycetaceae</taxon>
        <taxon>Saccharomyces</taxon>
    </lineage>
</organism>
<reference key="1">
    <citation type="journal article" date="1997" name="Nature">
        <title>The nucleotide sequence of Saccharomyces cerevisiae chromosome IX.</title>
        <authorList>
            <person name="Churcher C.M."/>
            <person name="Bowman S."/>
            <person name="Badcock K."/>
            <person name="Bankier A.T."/>
            <person name="Brown D."/>
            <person name="Chillingworth T."/>
            <person name="Connor R."/>
            <person name="Devlin K."/>
            <person name="Gentles S."/>
            <person name="Hamlin N."/>
            <person name="Harris D.E."/>
            <person name="Horsnell T."/>
            <person name="Hunt S."/>
            <person name="Jagels K."/>
            <person name="Jones M."/>
            <person name="Lye G."/>
            <person name="Moule S."/>
            <person name="Odell C."/>
            <person name="Pearson D."/>
            <person name="Rajandream M.A."/>
            <person name="Rice P."/>
            <person name="Rowley N."/>
            <person name="Skelton J."/>
            <person name="Smith V."/>
            <person name="Walsh S.V."/>
            <person name="Whitehead S."/>
            <person name="Barrell B.G."/>
        </authorList>
    </citation>
    <scope>NUCLEOTIDE SEQUENCE [LARGE SCALE GENOMIC DNA]</scope>
    <source>
        <strain>ATCC 204508 / S288c</strain>
    </source>
</reference>
<reference key="2">
    <citation type="journal article" date="2014" name="G3 (Bethesda)">
        <title>The reference genome sequence of Saccharomyces cerevisiae: Then and now.</title>
        <authorList>
            <person name="Engel S.R."/>
            <person name="Dietrich F.S."/>
            <person name="Fisk D.G."/>
            <person name="Binkley G."/>
            <person name="Balakrishnan R."/>
            <person name="Costanzo M.C."/>
            <person name="Dwight S.S."/>
            <person name="Hitz B.C."/>
            <person name="Karra K."/>
            <person name="Nash R.S."/>
            <person name="Weng S."/>
            <person name="Wong E.D."/>
            <person name="Lloyd P."/>
            <person name="Skrzypek M.S."/>
            <person name="Miyasato S.R."/>
            <person name="Simison M."/>
            <person name="Cherry J.M."/>
        </authorList>
    </citation>
    <scope>GENOME REANNOTATION</scope>
    <source>
        <strain>ATCC 204508 / S288c</strain>
    </source>
</reference>
<reference key="3">
    <citation type="journal article" date="2003" name="Nature">
        <title>Global analysis of protein localization in budding yeast.</title>
        <authorList>
            <person name="Huh W.-K."/>
            <person name="Falvo J.V."/>
            <person name="Gerke L.C."/>
            <person name="Carroll A.S."/>
            <person name="Howson R.W."/>
            <person name="Weissman J.S."/>
            <person name="O'Shea E.K."/>
        </authorList>
    </citation>
    <scope>SUBCELLULAR LOCATION [LARGE SCALE ANALYSIS]</scope>
</reference>
<reference key="4">
    <citation type="journal article" date="2003" name="Nature">
        <title>Global analysis of protein expression in yeast.</title>
        <authorList>
            <person name="Ghaemmaghami S."/>
            <person name="Huh W.-K."/>
            <person name="Bower K."/>
            <person name="Howson R.W."/>
            <person name="Belle A."/>
            <person name="Dephoure N."/>
            <person name="O'Shea E.K."/>
            <person name="Weissman J.S."/>
        </authorList>
    </citation>
    <scope>LEVEL OF PROTEIN EXPRESSION [LARGE SCALE ANALYSIS]</scope>
</reference>
<reference key="5">
    <citation type="journal article" date="2007" name="Mol. Biol. Cell">
        <title>Hse1, a component of the yeast Hrs-STAM ubiquitin-sorting complex, associates with ubiquitin peptidases and a ligase to control sorting efficiency into multivesicular bodies.</title>
        <authorList>
            <person name="Ren J."/>
            <person name="Kee Y."/>
            <person name="Huibregtse J.M."/>
            <person name="Piper R.C."/>
        </authorList>
    </citation>
    <scope>FUNCTION</scope>
    <scope>INTERACTION WITH HSE1</scope>
</reference>
<reference key="6">
    <citation type="journal article" date="2008" name="Mol. Cell. Proteomics">
        <title>A multidimensional chromatography technology for in-depth phosphoproteome analysis.</title>
        <authorList>
            <person name="Albuquerque C.P."/>
            <person name="Smolka M.B."/>
            <person name="Payne S.H."/>
            <person name="Bafna V."/>
            <person name="Eng J."/>
            <person name="Zhou H."/>
        </authorList>
    </citation>
    <scope>IDENTIFICATION BY MASS SPECTROMETRY [LARGE SCALE ANALYSIS]</scope>
</reference>
<reference key="7">
    <citation type="journal article" date="2009" name="Science">
        <title>Global analysis of Cdk1 substrate phosphorylation sites provides insights into evolution.</title>
        <authorList>
            <person name="Holt L.J."/>
            <person name="Tuch B.B."/>
            <person name="Villen J."/>
            <person name="Johnson A.D."/>
            <person name="Gygi S.P."/>
            <person name="Morgan D.O."/>
        </authorList>
    </citation>
    <scope>IDENTIFICATION BY MASS SPECTROMETRY [LARGE SCALE ANALYSIS]</scope>
</reference>
<accession>P40453</accession>
<accession>D6VVD1</accession>
<feature type="chain" id="PRO_0000080592" description="Ubiquitin carboxyl-terminal hydrolase 7">
    <location>
        <begin position="1"/>
        <end position="1071"/>
    </location>
</feature>
<feature type="domain" description="USP">
    <location>
        <begin position="609"/>
        <end position="1069"/>
    </location>
</feature>
<feature type="region of interest" description="Disordered" evidence="3">
    <location>
        <begin position="467"/>
        <end position="532"/>
    </location>
</feature>
<feature type="region of interest" description="Disordered" evidence="3">
    <location>
        <begin position="913"/>
        <end position="942"/>
    </location>
</feature>
<feature type="compositionally biased region" description="Low complexity" evidence="3">
    <location>
        <begin position="471"/>
        <end position="480"/>
    </location>
</feature>
<feature type="compositionally biased region" description="Polar residues" evidence="3">
    <location>
        <begin position="481"/>
        <end position="495"/>
    </location>
</feature>
<feature type="compositionally biased region" description="Pro residues" evidence="3">
    <location>
        <begin position="497"/>
        <end position="507"/>
    </location>
</feature>
<feature type="compositionally biased region" description="Pro residues" evidence="3">
    <location>
        <begin position="516"/>
        <end position="532"/>
    </location>
</feature>
<feature type="compositionally biased region" description="Polar residues" evidence="3">
    <location>
        <begin position="920"/>
        <end position="932"/>
    </location>
</feature>
<feature type="active site" description="Nucleophile" evidence="1 2">
    <location>
        <position position="618"/>
    </location>
</feature>
<feature type="active site" description="Proton acceptor" evidence="1 2">
    <location>
        <position position="1014"/>
    </location>
</feature>
<sequence length="1071" mass="123134">MLDDDKGTAMHPHITPFTPEYSNELLRRVQDLYHEDIKHYYPQLKLEKLLDLLEHTEYLFELYLDSIHHDRPNDALTAFIIGCYYVFLIIPQSLQFQTRNKSYSIYTDLKKMYENEMNMTNVVLMVKKEIGVVLDESVKHGAGIEHRITKKRAFSVPADDLSGQVASLSLDTAAPQDHGLKGTFTEDDAEQSSPVWTAPNLEPNDQLKLALLPEVIPTPAFREPERKTSVPVRPSVLLEDVPSIYHEDDTSFASLNPPFREITADRSVTHRKDSYHSVYMVDSGNLKEDNDDLFNVENDGFIQSLDILQKQSIITAPELFSILSNRVEREKVLLIDLRIPQRSAINHIVAPNLVNVDPNLLWDKQTNTPIYKDDILEHLLKENENFINRNKFDYIVYYTDVKTFMTINFDYAFIFFYLMLTSQKTPLTTVPTTLLGGYEKWKKTLHSYAQEYHISIEDYLYRPYSQKARLQQEQQQQQQQPDSQDSFSAKESSTKVPEPPSWKPPDLPIRLRKRPPPPPPVSMPTTPEIPPPLPPKIMVHSQVSSISRKPPIPAKQHVKKEQLNSNEIIQRKRQHQHQHYDQQILQPQRAYNIPTIERSPNVYVSLSITGLRNLGNTCYINSMIQCLFAAKTFRTLFISSKYKSYLQPIRSNGSHYSPKLSNSLSMLFNKMYLNGGCSVVPTGFLKVINQLRPDLKIPDDQQDTQEFLMILLDRLHDELSDQQHVANDYPNLLLYNADALKVSNNEYKHWFDKNVIGNGISPIDDIFQGQMENSLQCKRCGYTTFNYSTFYVLSLAIPRRSMKLSKLGRSTEKRVKLEDCINMFTSDEVLSGENAWDCPRCGPTASVSTSVSALENEPSIVKSKKKKSRFFTLHTGTKRRHLDFFGDGITEGHNSNNNNTTIFERERSRSPFRMLGGSGKRSSSSTPFSTGGNDSNNSSDYKNKKLTTVKTINFVTLPKILVIHLSRFYYDLTKKNNTVVTYPLILNIILKNNDTMKYKLFGVVNHTGTLISGHYTSLVNKDLEHNVNIGRSKWYYFDDEVVKADRKHGSDKNLKISSSDVYVLFYERVYD</sequence>
<proteinExistence type="evidence at protein level"/>
<evidence type="ECO:0000255" key="1">
    <source>
        <dbReference type="PROSITE-ProRule" id="PRU10092"/>
    </source>
</evidence>
<evidence type="ECO:0000255" key="2">
    <source>
        <dbReference type="PROSITE-ProRule" id="PRU10093"/>
    </source>
</evidence>
<evidence type="ECO:0000256" key="3">
    <source>
        <dbReference type="SAM" id="MobiDB-lite"/>
    </source>
</evidence>
<evidence type="ECO:0000269" key="4">
    <source>
    </source>
</evidence>
<evidence type="ECO:0000269" key="5">
    <source>
    </source>
</evidence>
<evidence type="ECO:0000269" key="6">
    <source>
    </source>
</evidence>
<evidence type="ECO:0000305" key="7"/>
<name>UBP7_YEAST</name>
<keyword id="KW-0963">Cytoplasm</keyword>
<keyword id="KW-0378">Hydrolase</keyword>
<keyword id="KW-0645">Protease</keyword>
<keyword id="KW-1185">Reference proteome</keyword>
<keyword id="KW-0788">Thiol protease</keyword>
<keyword id="KW-0833">Ubl conjugation pathway</keyword>
<protein>
    <recommendedName>
        <fullName>Ubiquitin carboxyl-terminal hydrolase 7</fullName>
        <ecNumber>3.4.19.12</ecNumber>
    </recommendedName>
    <alternativeName>
        <fullName>Deubiquitinating enzyme 7</fullName>
    </alternativeName>
    <alternativeName>
        <fullName>Ubiquitin thioesterase 7</fullName>
    </alternativeName>
    <alternativeName>
        <fullName>Ubiquitin-specific-processing protease 7</fullName>
    </alternativeName>
</protein>